<evidence type="ECO:0000250" key="1">
    <source>
        <dbReference type="UniProtKB" id="Q9PRJ8"/>
    </source>
</evidence>
<evidence type="ECO:0000255" key="2"/>
<evidence type="ECO:0000255" key="3">
    <source>
        <dbReference type="PROSITE-ProRule" id="PRU00089"/>
    </source>
</evidence>
<evidence type="ECO:0000256" key="4">
    <source>
        <dbReference type="SAM" id="MobiDB-lite"/>
    </source>
</evidence>
<evidence type="ECO:0000269" key="5">
    <source>
    </source>
</evidence>
<evidence type="ECO:0000269" key="6">
    <source>
    </source>
</evidence>
<evidence type="ECO:0000269" key="7">
    <source>
    </source>
</evidence>
<evidence type="ECO:0000269" key="8">
    <source>
    </source>
</evidence>
<evidence type="ECO:0000303" key="9">
    <source>
    </source>
</evidence>
<evidence type="ECO:0000305" key="10"/>
<evidence type="ECO:0000312" key="11">
    <source>
        <dbReference type="EMBL" id="AAA85023.1"/>
    </source>
</evidence>
<evidence type="ECO:0000312" key="12">
    <source>
        <dbReference type="EMBL" id="AAF34705.1"/>
    </source>
</evidence>
<evidence type="ECO:0000312" key="13">
    <source>
        <dbReference type="EMBL" id="CAB44729.1"/>
    </source>
</evidence>
<evidence type="ECO:0000312" key="14">
    <source>
        <dbReference type="EMBL" id="CAH64538.1"/>
    </source>
</evidence>
<gene>
    <name type="primary">foxd5-b</name>
    <name evidence="11" type="synonym">fhd3</name>
    <name evidence="9" type="synonym">fkh-l</name>
    <name evidence="14" type="synonym">foxd5b</name>
</gene>
<protein>
    <recommendedName>
        <fullName>Forkhead box protein D5-B</fullName>
        <shortName>FoxD5-B</shortName>
        <shortName>FoxD5b</shortName>
    </recommendedName>
    <alternativeName>
        <fullName>Fork head domain protein 3</fullName>
    </alternativeName>
    <alternativeName>
        <fullName>Fork head domain-related protein 12'</fullName>
        <shortName>xFD-12'</shortName>
    </alternativeName>
    <alternativeName>
        <fullName>Forkhead-like</fullName>
        <shortName>xFLIP</shortName>
    </alternativeName>
    <alternativeName>
        <fullName>XlFoxD5b</fullName>
    </alternativeName>
</protein>
<dbReference type="EMBL" id="AJ242677">
    <property type="protein sequence ID" value="CAB44729.1"/>
    <property type="molecule type" value="mRNA"/>
</dbReference>
<dbReference type="EMBL" id="AF223426">
    <property type="protein sequence ID" value="AAF34705.1"/>
    <property type="molecule type" value="mRNA"/>
</dbReference>
<dbReference type="EMBL" id="AJ850136">
    <property type="protein sequence ID" value="CAH64538.1"/>
    <property type="molecule type" value="Genomic_DNA"/>
</dbReference>
<dbReference type="EMBL" id="U04872">
    <property type="protein sequence ID" value="AAA85023.1"/>
    <property type="molecule type" value="mRNA"/>
</dbReference>
<dbReference type="PIR" id="S50124">
    <property type="entry name" value="S50124"/>
</dbReference>
<dbReference type="RefSeq" id="NP_001091898.1">
    <property type="nucleotide sequence ID" value="NM_001098428.1"/>
</dbReference>
<dbReference type="SMR" id="Q9PT68"/>
<dbReference type="GeneID" id="394316"/>
<dbReference type="GeneID" id="398016"/>
<dbReference type="KEGG" id="xla:398016"/>
<dbReference type="CTD" id="394316"/>
<dbReference type="CTD" id="398016"/>
<dbReference type="OrthoDB" id="5402974at2759"/>
<dbReference type="Proteomes" id="UP000186698">
    <property type="component" value="Chromosome 1L"/>
</dbReference>
<dbReference type="Bgee" id="398016">
    <property type="expression patterns" value="Expressed in gastrula and 2 other cell types or tissues"/>
</dbReference>
<dbReference type="GO" id="GO:0005634">
    <property type="term" value="C:nucleus"/>
    <property type="evidence" value="ECO:0000250"/>
    <property type="project" value="UniProtKB"/>
</dbReference>
<dbReference type="GO" id="GO:0003677">
    <property type="term" value="F:DNA binding"/>
    <property type="evidence" value="ECO:0000303"/>
    <property type="project" value="UniProtKB"/>
</dbReference>
<dbReference type="GO" id="GO:0003700">
    <property type="term" value="F:DNA-binding transcription factor activity"/>
    <property type="evidence" value="ECO:0000303"/>
    <property type="project" value="UniProtKB"/>
</dbReference>
<dbReference type="GO" id="GO:0000981">
    <property type="term" value="F:DNA-binding transcription factor activity, RNA polymerase II-specific"/>
    <property type="evidence" value="ECO:0000318"/>
    <property type="project" value="GO_Central"/>
</dbReference>
<dbReference type="GO" id="GO:0000978">
    <property type="term" value="F:RNA polymerase II cis-regulatory region sequence-specific DNA binding"/>
    <property type="evidence" value="ECO:0000318"/>
    <property type="project" value="GO_Central"/>
</dbReference>
<dbReference type="GO" id="GO:0009653">
    <property type="term" value="P:anatomical structure morphogenesis"/>
    <property type="evidence" value="ECO:0000318"/>
    <property type="project" value="GO_Central"/>
</dbReference>
<dbReference type="GO" id="GO:0030154">
    <property type="term" value="P:cell differentiation"/>
    <property type="evidence" value="ECO:0000318"/>
    <property type="project" value="GO_Central"/>
</dbReference>
<dbReference type="GO" id="GO:0045892">
    <property type="term" value="P:negative regulation of DNA-templated transcription"/>
    <property type="evidence" value="ECO:0000250"/>
    <property type="project" value="UniProtKB"/>
</dbReference>
<dbReference type="GO" id="GO:0007399">
    <property type="term" value="P:nervous system development"/>
    <property type="evidence" value="ECO:0007669"/>
    <property type="project" value="UniProtKB-KW"/>
</dbReference>
<dbReference type="GO" id="GO:0001840">
    <property type="term" value="P:neural plate development"/>
    <property type="evidence" value="ECO:0000270"/>
    <property type="project" value="UniProtKB"/>
</dbReference>
<dbReference type="GO" id="GO:0006355">
    <property type="term" value="P:regulation of DNA-templated transcription"/>
    <property type="evidence" value="ECO:0000303"/>
    <property type="project" value="UniProtKB"/>
</dbReference>
<dbReference type="GO" id="GO:0006357">
    <property type="term" value="P:regulation of transcription by RNA polymerase II"/>
    <property type="evidence" value="ECO:0000318"/>
    <property type="project" value="GO_Central"/>
</dbReference>
<dbReference type="CDD" id="cd20048">
    <property type="entry name" value="FH_FOXD4-like"/>
    <property type="match status" value="1"/>
</dbReference>
<dbReference type="FunFam" id="1.10.10.10:FF:000016">
    <property type="entry name" value="Forkhead box protein I1"/>
    <property type="match status" value="1"/>
</dbReference>
<dbReference type="Gene3D" id="1.10.10.10">
    <property type="entry name" value="Winged helix-like DNA-binding domain superfamily/Winged helix DNA-binding domain"/>
    <property type="match status" value="1"/>
</dbReference>
<dbReference type="InterPro" id="IPR001766">
    <property type="entry name" value="Fork_head_dom"/>
</dbReference>
<dbReference type="InterPro" id="IPR050211">
    <property type="entry name" value="FOX_domain-containing"/>
</dbReference>
<dbReference type="InterPro" id="IPR018122">
    <property type="entry name" value="TF_fork_head_CS_1"/>
</dbReference>
<dbReference type="InterPro" id="IPR030456">
    <property type="entry name" value="TF_fork_head_CS_2"/>
</dbReference>
<dbReference type="InterPro" id="IPR036388">
    <property type="entry name" value="WH-like_DNA-bd_sf"/>
</dbReference>
<dbReference type="InterPro" id="IPR036390">
    <property type="entry name" value="WH_DNA-bd_sf"/>
</dbReference>
<dbReference type="PANTHER" id="PTHR11829">
    <property type="entry name" value="FORKHEAD BOX PROTEIN"/>
    <property type="match status" value="1"/>
</dbReference>
<dbReference type="PANTHER" id="PTHR11829:SF401">
    <property type="entry name" value="FORKHEAD BOX PROTEIN D5"/>
    <property type="match status" value="1"/>
</dbReference>
<dbReference type="Pfam" id="PF00250">
    <property type="entry name" value="Forkhead"/>
    <property type="match status" value="1"/>
</dbReference>
<dbReference type="PRINTS" id="PR00053">
    <property type="entry name" value="FORKHEAD"/>
</dbReference>
<dbReference type="SMART" id="SM00339">
    <property type="entry name" value="FH"/>
    <property type="match status" value="1"/>
</dbReference>
<dbReference type="SUPFAM" id="SSF46785">
    <property type="entry name" value="Winged helix' DNA-binding domain"/>
    <property type="match status" value="1"/>
</dbReference>
<dbReference type="PROSITE" id="PS00657">
    <property type="entry name" value="FORK_HEAD_1"/>
    <property type="match status" value="1"/>
</dbReference>
<dbReference type="PROSITE" id="PS00658">
    <property type="entry name" value="FORK_HEAD_2"/>
    <property type="match status" value="1"/>
</dbReference>
<dbReference type="PROSITE" id="PS50039">
    <property type="entry name" value="FORK_HEAD_3"/>
    <property type="match status" value="1"/>
</dbReference>
<accession>Q9PT68</accession>
<accession>Q91763</accession>
<sequence>MSFSQESGTHHNSLDYAGVSDEEDEIDILGEDDPCSLKSHFYLQPTHSDMGDSGMLSPSKLSCTESESDSSGESEGGTSKDSPATSPGGKAKRALVKPPYSYIALITMAILQSPHKKLTLSGICDFISSKFPYYKDKFPAWQNSIRHNLSLNDCFIKIPREPGNPGKGNYWTLDPASEDMFDNGSFLRRRKRFKRHQQEFFKDGLMMYNSLPYYRPYSALQPQPMLQQTPLACMAIPETLSMPTNLTPYPDIKRKAHYPDQGAHRGFEGQDANNHPNKSQSKCSFSIENIMKKPKEPEPSFPSFNSHWNYNNHLLQRPSSCFLPAVLNLSTGPLLANVQGTRQYNLIKFPGSY</sequence>
<name>FXD5B_XENLA</name>
<feature type="chain" id="PRO_0000259616" description="Forkhead box protein D5-B">
    <location>
        <begin position="1"/>
        <end position="353"/>
    </location>
</feature>
<feature type="DNA-binding region" description="Fork-head" evidence="3">
    <location>
        <begin position="97"/>
        <end position="191"/>
    </location>
</feature>
<feature type="region of interest" description="Disordered" evidence="4">
    <location>
        <begin position="1"/>
        <end position="32"/>
    </location>
</feature>
<feature type="region of interest" description="Disordered" evidence="4">
    <location>
        <begin position="48"/>
        <end position="92"/>
    </location>
</feature>
<feature type="region of interest" description="Disordered" evidence="4">
    <location>
        <begin position="254"/>
        <end position="281"/>
    </location>
</feature>
<feature type="compositionally biased region" description="Acidic residues" evidence="4">
    <location>
        <begin position="20"/>
        <end position="32"/>
    </location>
</feature>
<feature type="compositionally biased region" description="Low complexity" evidence="4">
    <location>
        <begin position="73"/>
        <end position="82"/>
    </location>
</feature>
<feature type="compositionally biased region" description="Polar residues" evidence="4">
    <location>
        <begin position="271"/>
        <end position="281"/>
    </location>
</feature>
<reference evidence="10 13" key="1">
    <citation type="journal article" date="1999" name="Mech. Dev.">
        <title>Characterization of a subfamily of related winged helix genes, XFD-12/12'/12'' (XFLIP), during Xenopus embryogenesis.</title>
        <authorList>
            <person name="Soelter M."/>
            <person name="Koester M."/>
            <person name="Hollemann T."/>
            <person name="Brey A."/>
            <person name="Pieler T."/>
            <person name="Knoechel W."/>
        </authorList>
    </citation>
    <scope>NUCLEOTIDE SEQUENCE [MRNA]</scope>
    <scope>TISSUE SPECIFICITY</scope>
    <scope>DEVELOPMENTAL STAGE</scope>
    <source>
        <tissue evidence="5">Gastrula</tissue>
    </source>
</reference>
<reference evidence="10 12" key="2">
    <citation type="journal article" date="2000" name="Mech. Dev.">
        <title>Neuroectodermal specification and regionalization of the Spemann organizer in Xenopus.</title>
        <authorList>
            <person name="Fetka I."/>
            <person name="Doederlein G."/>
            <person name="Bouwmeester T."/>
        </authorList>
    </citation>
    <scope>NUCLEOTIDE SEQUENCE [MRNA]</scope>
    <scope>FUNCTION</scope>
    <scope>TISSUE SPECIFICITY</scope>
    <scope>INDUCTION</scope>
    <source>
        <tissue evidence="6">Dorsal lip</tissue>
    </source>
</reference>
<reference evidence="10 14" key="3">
    <citation type="journal article" date="2004" name="Biochem. Biophys. Res. Commun.">
        <title>A downstream enhancer is essential for Xenopus FoxD5 transcription.</title>
        <authorList>
            <person name="Schoen C."/>
            <person name="Koester M."/>
            <person name="Knoechel W."/>
        </authorList>
    </citation>
    <scope>NUCLEOTIDE SEQUENCE [GENOMIC DNA]</scope>
    <scope>TISSUE SPECIFICITY</scope>
</reference>
<reference evidence="10 11" key="4">
    <citation type="journal article" date="1994" name="Nucleic Acids Res.">
        <title>Novel HOX, POU and FKH genes expressed during bFGF-induced mesodermal differentiation in Xenopus.</title>
        <authorList>
            <person name="King M.W."/>
            <person name="Moore M.J."/>
        </authorList>
    </citation>
    <scope>NUCLEOTIDE SEQUENCE [MRNA] OF 112-142</scope>
    <scope>TISSUE SPECIFICITY</scope>
    <scope>DEVELOPMENTAL STAGE</scope>
    <source>
        <tissue evidence="8">Embryo</tissue>
    </source>
</reference>
<reference evidence="10" key="5">
    <citation type="journal article" date="2005" name="Gene">
        <title>Of fox and frogs: fox (fork head/winged helix) transcription factors in Xenopus development.</title>
        <authorList>
            <person name="Pohl B.S."/>
            <person name="Knoechel W."/>
        </authorList>
    </citation>
    <scope>REVIEW</scope>
</reference>
<keyword id="KW-0217">Developmental protein</keyword>
<keyword id="KW-0221">Differentiation</keyword>
<keyword id="KW-0238">DNA-binding</keyword>
<keyword id="KW-0524">Neurogenesis</keyword>
<keyword id="KW-0539">Nucleus</keyword>
<keyword id="KW-1185">Reference proteome</keyword>
<keyword id="KW-0678">Repressor</keyword>
<keyword id="KW-0804">Transcription</keyword>
<keyword id="KW-0805">Transcription regulation</keyword>
<organism>
    <name type="scientific">Xenopus laevis</name>
    <name type="common">African clawed frog</name>
    <dbReference type="NCBI Taxonomy" id="8355"/>
    <lineage>
        <taxon>Eukaryota</taxon>
        <taxon>Metazoa</taxon>
        <taxon>Chordata</taxon>
        <taxon>Craniata</taxon>
        <taxon>Vertebrata</taxon>
        <taxon>Euteleostomi</taxon>
        <taxon>Amphibia</taxon>
        <taxon>Batrachia</taxon>
        <taxon>Anura</taxon>
        <taxon>Pipoidea</taxon>
        <taxon>Pipidae</taxon>
        <taxon>Xenopodinae</taxon>
        <taxon>Xenopus</taxon>
        <taxon>Xenopus</taxon>
    </lineage>
</organism>
<proteinExistence type="evidence at transcript level"/>
<comment type="function">
    <text evidence="1 6">Transcriptional repressor (By similarity). Controls the convergence and extension movements of medial neural plate precursors during gastrulation.</text>
</comment>
<comment type="subcellular location">
    <subcellularLocation>
        <location evidence="2 10">Nucleus</location>
    </subcellularLocation>
</comment>
<comment type="tissue specificity">
    <text evidence="5 6 7 8">Expression is initiated at the late blastula stage in the presumptive dorsal marginal zone, prior to blastopore lip formation. At the onset of gastrulation, expressed in the superficial layer of cells in the dorsal blastopore lip (Spemann organizer). In the open neural plate, expressed dynamically in a row of cells along the dorsal midline that are destined to become the floor plate of the neural tube. Only weakly expressed in the posterior region of the newly forming notochord. After neural tube closure, expression is detected only in the tailtip and a small area located at the midbrain/hindbrain boundary.</text>
</comment>
<comment type="developmental stage">
    <text evidence="5 8">Expressed both maternally and zygotically. Maternal expression levels are low and become further reduced after fertilization. Zygotic expression begins at the mid-blastula transition and peaks during the gastrula/neurula stages before declining again by stage 34.</text>
</comment>
<comment type="induction">
    <text evidence="6">By FGF-signaling. Inhibited by bmp-signaling.</text>
</comment>